<evidence type="ECO:0000250" key="1"/>
<evidence type="ECO:0000250" key="2">
    <source>
        <dbReference type="UniProtKB" id="P06634"/>
    </source>
</evidence>
<evidence type="ECO:0000255" key="3">
    <source>
        <dbReference type="PROSITE-ProRule" id="PRU00541"/>
    </source>
</evidence>
<evidence type="ECO:0000255" key="4">
    <source>
        <dbReference type="PROSITE-ProRule" id="PRU00542"/>
    </source>
</evidence>
<evidence type="ECO:0000256" key="5">
    <source>
        <dbReference type="SAM" id="MobiDB-lite"/>
    </source>
</evidence>
<evidence type="ECO:0000305" key="6"/>
<protein>
    <recommendedName>
        <fullName>ATP-dependent RNA helicase DED1</fullName>
        <ecNumber>3.6.4.13</ecNumber>
    </recommendedName>
</protein>
<accession>A6ZP47</accession>
<name>DED1_YEAS7</name>
<keyword id="KW-0007">Acetylation</keyword>
<keyword id="KW-0067">ATP-binding</keyword>
<keyword id="KW-0963">Cytoplasm</keyword>
<keyword id="KW-0347">Helicase</keyword>
<keyword id="KW-0378">Hydrolase</keyword>
<keyword id="KW-0396">Initiation factor</keyword>
<keyword id="KW-1017">Isopeptide bond</keyword>
<keyword id="KW-0488">Methylation</keyword>
<keyword id="KW-0547">Nucleotide-binding</keyword>
<keyword id="KW-0597">Phosphoprotein</keyword>
<keyword id="KW-0648">Protein biosynthesis</keyword>
<keyword id="KW-0694">RNA-binding</keyword>
<keyword id="KW-0832">Ubl conjugation</keyword>
<organism>
    <name type="scientific">Saccharomyces cerevisiae (strain YJM789)</name>
    <name type="common">Baker's yeast</name>
    <dbReference type="NCBI Taxonomy" id="307796"/>
    <lineage>
        <taxon>Eukaryota</taxon>
        <taxon>Fungi</taxon>
        <taxon>Dikarya</taxon>
        <taxon>Ascomycota</taxon>
        <taxon>Saccharomycotina</taxon>
        <taxon>Saccharomycetes</taxon>
        <taxon>Saccharomycetales</taxon>
        <taxon>Saccharomycetaceae</taxon>
        <taxon>Saccharomyces</taxon>
    </lineage>
</organism>
<dbReference type="EC" id="3.6.4.13"/>
<dbReference type="EMBL" id="AAFW02000032">
    <property type="protein sequence ID" value="EDN63537.1"/>
    <property type="molecule type" value="Genomic_DNA"/>
</dbReference>
<dbReference type="SMR" id="A6ZP47"/>
<dbReference type="IntAct" id="A6ZP47">
    <property type="interactions" value="2"/>
</dbReference>
<dbReference type="MINT" id="A6ZP47"/>
<dbReference type="HOGENOM" id="CLU_003041_16_3_1"/>
<dbReference type="Proteomes" id="UP000007060">
    <property type="component" value="Unassembled WGS sequence"/>
</dbReference>
<dbReference type="GO" id="GO:0005737">
    <property type="term" value="C:cytoplasm"/>
    <property type="evidence" value="ECO:0007669"/>
    <property type="project" value="UniProtKB-SubCell"/>
</dbReference>
<dbReference type="GO" id="GO:0005524">
    <property type="term" value="F:ATP binding"/>
    <property type="evidence" value="ECO:0007669"/>
    <property type="project" value="UniProtKB-KW"/>
</dbReference>
<dbReference type="GO" id="GO:0016887">
    <property type="term" value="F:ATP hydrolysis activity"/>
    <property type="evidence" value="ECO:0007669"/>
    <property type="project" value="RHEA"/>
</dbReference>
<dbReference type="GO" id="GO:0003723">
    <property type="term" value="F:RNA binding"/>
    <property type="evidence" value="ECO:0007669"/>
    <property type="project" value="UniProtKB-KW"/>
</dbReference>
<dbReference type="GO" id="GO:0003724">
    <property type="term" value="F:RNA helicase activity"/>
    <property type="evidence" value="ECO:0007669"/>
    <property type="project" value="UniProtKB-EC"/>
</dbReference>
<dbReference type="GO" id="GO:0003743">
    <property type="term" value="F:translation initiation factor activity"/>
    <property type="evidence" value="ECO:0007669"/>
    <property type="project" value="UniProtKB-KW"/>
</dbReference>
<dbReference type="CDD" id="cd17967">
    <property type="entry name" value="DEADc_DDX3_DDX4"/>
    <property type="match status" value="1"/>
</dbReference>
<dbReference type="CDD" id="cd18787">
    <property type="entry name" value="SF2_C_DEAD"/>
    <property type="match status" value="1"/>
</dbReference>
<dbReference type="FunFam" id="3.40.50.300:FF:000160">
    <property type="entry name" value="ATP-dependent RNA helicase DDX3X"/>
    <property type="match status" value="1"/>
</dbReference>
<dbReference type="FunFam" id="3.40.50.300:FF:000008">
    <property type="entry name" value="ATP-dependent RNA helicase RhlB"/>
    <property type="match status" value="1"/>
</dbReference>
<dbReference type="Gene3D" id="3.40.50.300">
    <property type="entry name" value="P-loop containing nucleotide triphosphate hydrolases"/>
    <property type="match status" value="2"/>
</dbReference>
<dbReference type="InterPro" id="IPR011545">
    <property type="entry name" value="DEAD/DEAH_box_helicase_dom"/>
</dbReference>
<dbReference type="InterPro" id="IPR044763">
    <property type="entry name" value="Ded1/Dbp1_DEADc"/>
</dbReference>
<dbReference type="InterPro" id="IPR014001">
    <property type="entry name" value="Helicase_ATP-bd"/>
</dbReference>
<dbReference type="InterPro" id="IPR001650">
    <property type="entry name" value="Helicase_C-like"/>
</dbReference>
<dbReference type="InterPro" id="IPR027417">
    <property type="entry name" value="P-loop_NTPase"/>
</dbReference>
<dbReference type="InterPro" id="IPR000629">
    <property type="entry name" value="RNA-helicase_DEAD-box_CS"/>
</dbReference>
<dbReference type="InterPro" id="IPR014014">
    <property type="entry name" value="RNA_helicase_DEAD_Q_motif"/>
</dbReference>
<dbReference type="PANTHER" id="PTHR47958">
    <property type="entry name" value="ATP-DEPENDENT RNA HELICASE DBP3"/>
    <property type="match status" value="1"/>
</dbReference>
<dbReference type="Pfam" id="PF00270">
    <property type="entry name" value="DEAD"/>
    <property type="match status" value="1"/>
</dbReference>
<dbReference type="Pfam" id="PF00271">
    <property type="entry name" value="Helicase_C"/>
    <property type="match status" value="1"/>
</dbReference>
<dbReference type="SMART" id="SM00487">
    <property type="entry name" value="DEXDc"/>
    <property type="match status" value="1"/>
</dbReference>
<dbReference type="SMART" id="SM00490">
    <property type="entry name" value="HELICc"/>
    <property type="match status" value="1"/>
</dbReference>
<dbReference type="SUPFAM" id="SSF52540">
    <property type="entry name" value="P-loop containing nucleoside triphosphate hydrolases"/>
    <property type="match status" value="1"/>
</dbReference>
<dbReference type="PROSITE" id="PS00039">
    <property type="entry name" value="DEAD_ATP_HELICASE"/>
    <property type="match status" value="1"/>
</dbReference>
<dbReference type="PROSITE" id="PS51192">
    <property type="entry name" value="HELICASE_ATP_BIND_1"/>
    <property type="match status" value="1"/>
</dbReference>
<dbReference type="PROSITE" id="PS51194">
    <property type="entry name" value="HELICASE_CTER"/>
    <property type="match status" value="1"/>
</dbReference>
<dbReference type="PROSITE" id="PS51195">
    <property type="entry name" value="Q_MOTIF"/>
    <property type="match status" value="1"/>
</dbReference>
<proteinExistence type="inferred from homology"/>
<gene>
    <name type="primary">DED1</name>
    <name type="ORF">SCY_5262</name>
</gene>
<comment type="function">
    <text evidence="1">ATP-binding RNA helicase involved in translation initiation. Remodels RNA in response to ADP and ATP concentrations by facilitating disruption, but also formation of RNA duplexes (By similarity).</text>
</comment>
<comment type="catalytic activity">
    <reaction>
        <text>ATP + H2O = ADP + phosphate + H(+)</text>
        <dbReference type="Rhea" id="RHEA:13065"/>
        <dbReference type="ChEBI" id="CHEBI:15377"/>
        <dbReference type="ChEBI" id="CHEBI:15378"/>
        <dbReference type="ChEBI" id="CHEBI:30616"/>
        <dbReference type="ChEBI" id="CHEBI:43474"/>
        <dbReference type="ChEBI" id="CHEBI:456216"/>
        <dbReference type="EC" id="3.6.4.13"/>
    </reaction>
</comment>
<comment type="subcellular location">
    <subcellularLocation>
        <location evidence="1">Cytoplasm</location>
    </subcellularLocation>
</comment>
<comment type="domain">
    <text>The Q motif is unique to and characteristic of the DEAD box family of RNA helicases and controls ATP binding and hydrolysis.</text>
</comment>
<comment type="similarity">
    <text evidence="6">Belongs to the DEAD box helicase family. DDX3/DED1 subfamily.</text>
</comment>
<feature type="initiator methionine" description="Removed" evidence="2">
    <location>
        <position position="1"/>
    </location>
</feature>
<feature type="chain" id="PRO_0000310184" description="ATP-dependent RNA helicase DED1">
    <location>
        <begin position="2"/>
        <end position="604"/>
    </location>
</feature>
<feature type="domain" description="Helicase ATP-binding" evidence="3">
    <location>
        <begin position="173"/>
        <end position="362"/>
    </location>
</feature>
<feature type="domain" description="Helicase C-terminal" evidence="4">
    <location>
        <begin position="373"/>
        <end position="533"/>
    </location>
</feature>
<feature type="region of interest" description="Disordered" evidence="5">
    <location>
        <begin position="1"/>
        <end position="55"/>
    </location>
</feature>
<feature type="region of interest" description="Disordered" evidence="5">
    <location>
        <begin position="67"/>
        <end position="94"/>
    </location>
</feature>
<feature type="region of interest" description="Disordered" evidence="5">
    <location>
        <begin position="533"/>
        <end position="604"/>
    </location>
</feature>
<feature type="short sequence motif" description="Q motif">
    <location>
        <begin position="142"/>
        <end position="170"/>
    </location>
</feature>
<feature type="short sequence motif" description="DEAD box">
    <location>
        <begin position="306"/>
        <end position="309"/>
    </location>
</feature>
<feature type="compositionally biased region" description="Polar residues" evidence="5">
    <location>
        <begin position="1"/>
        <end position="19"/>
    </location>
</feature>
<feature type="compositionally biased region" description="Low complexity" evidence="5">
    <location>
        <begin position="34"/>
        <end position="45"/>
    </location>
</feature>
<feature type="compositionally biased region" description="Gly residues" evidence="5">
    <location>
        <begin position="46"/>
        <end position="55"/>
    </location>
</feature>
<feature type="compositionally biased region" description="Gly residues" evidence="5">
    <location>
        <begin position="67"/>
        <end position="76"/>
    </location>
</feature>
<feature type="compositionally biased region" description="Low complexity" evidence="5">
    <location>
        <begin position="584"/>
        <end position="604"/>
    </location>
</feature>
<feature type="binding site" evidence="3">
    <location>
        <begin position="186"/>
        <end position="193"/>
    </location>
    <ligand>
        <name>ATP</name>
        <dbReference type="ChEBI" id="CHEBI:30616"/>
    </ligand>
</feature>
<feature type="modified residue" description="N-acetylalanine" evidence="2">
    <location>
        <position position="2"/>
    </location>
</feature>
<feature type="modified residue" description="Dimethylated arginine" evidence="2">
    <location>
        <position position="62"/>
    </location>
</feature>
<feature type="modified residue" description="Phosphoserine" evidence="2">
    <location>
        <position position="215"/>
    </location>
</feature>
<feature type="modified residue" description="Phosphoserine" evidence="2">
    <location>
        <position position="218"/>
    </location>
</feature>
<feature type="modified residue" description="Phosphoserine" evidence="2">
    <location>
        <position position="263"/>
    </location>
</feature>
<feature type="modified residue" description="Phosphoserine" evidence="2">
    <location>
        <position position="535"/>
    </location>
</feature>
<feature type="modified residue" description="Phosphoserine" evidence="2">
    <location>
        <position position="539"/>
    </location>
</feature>
<feature type="modified residue" description="Phosphoserine" evidence="2">
    <location>
        <position position="543"/>
    </location>
</feature>
<feature type="modified residue" description="Phosphoserine" evidence="2">
    <location>
        <position position="572"/>
    </location>
</feature>
<feature type="modified residue" description="Phosphoserine" evidence="2">
    <location>
        <position position="576"/>
    </location>
</feature>
<feature type="modified residue" description="Phosphoserine" evidence="2">
    <location>
        <position position="598"/>
    </location>
</feature>
<feature type="cross-link" description="Glycyl lysine isopeptide (Lys-Gly) (interchain with G-Cter in ubiquitin)" evidence="2">
    <location>
        <position position="158"/>
    </location>
</feature>
<sequence length="604" mass="65553">MAELSEQVQNLSINDNNENGYVPPHLRGKPRSARNNSSNYNNNNGGYNGGRGGGSFFSNNRRGGYGNGGFFGGNNGGSRSNGRSGGRWIDGKHVPAPRNEKAEIALFGVPEDPNFQSSGINFDNYDDIPVDASGKDVPEPITEFTSPPLDGLLLENIKLARFTKPTPVQKYSVPIVANGRDLMACAQTGSGKTGGFLFPVLSESFKTGPSPQPESQGSFYQRKAYPTAVIMAPTRELATQIFDEAKKFTYRSWVKACVVYGGSPIGNQLREIERGCDLLVATPGRLNDLLERGKISLANVKYLVLDEADRMLDMGFEPQIRHIVEDCDMTPVGERQTLMFSATFPADIQHLARDFLSDYIFLSVGRVGSTSENITQKVLYVENQDKKSALLDLLSASTDGLTLIFVETKRMADQLTDFLIMQNFRATAIHGDRTQSERERALAAFRSGAATLLVATAVAARGLDIPNVTHVINYDLPSDVDDYVHRIGRTGRAGNTGLATAFFNSENSNIVKGLHEILTEANQEVPSFLKDAMMSAPGSRSNSRRGGFGRNNNRDYRKAGGASAGGWGSSRSRDNSFRGGSGWGSDSKSSGWGNSGGSNNSSWW</sequence>
<reference key="1">
    <citation type="journal article" date="2007" name="Proc. Natl. Acad. Sci. U.S.A.">
        <title>Genome sequencing and comparative analysis of Saccharomyces cerevisiae strain YJM789.</title>
        <authorList>
            <person name="Wei W."/>
            <person name="McCusker J.H."/>
            <person name="Hyman R.W."/>
            <person name="Jones T."/>
            <person name="Ning Y."/>
            <person name="Cao Z."/>
            <person name="Gu Z."/>
            <person name="Bruno D."/>
            <person name="Miranda M."/>
            <person name="Nguyen M."/>
            <person name="Wilhelmy J."/>
            <person name="Komp C."/>
            <person name="Tamse R."/>
            <person name="Wang X."/>
            <person name="Jia P."/>
            <person name="Luedi P."/>
            <person name="Oefner P.J."/>
            <person name="David L."/>
            <person name="Dietrich F.S."/>
            <person name="Li Y."/>
            <person name="Davis R.W."/>
            <person name="Steinmetz L.M."/>
        </authorList>
    </citation>
    <scope>NUCLEOTIDE SEQUENCE [LARGE SCALE GENOMIC DNA]</scope>
    <source>
        <strain>YJM789</strain>
    </source>
</reference>